<keyword id="KW-0963">Cytoplasm</keyword>
<keyword id="KW-0690">Ribosome biogenesis</keyword>
<reference key="1">
    <citation type="journal article" date="2004" name="Proc. Natl. Acad. Sci. U.S.A.">
        <title>Complete genomes of two clinical Staphylococcus aureus strains: evidence for the rapid evolution of virulence and drug resistance.</title>
        <authorList>
            <person name="Holden M.T.G."/>
            <person name="Feil E.J."/>
            <person name="Lindsay J.A."/>
            <person name="Peacock S.J."/>
            <person name="Day N.P.J."/>
            <person name="Enright M.C."/>
            <person name="Foster T.J."/>
            <person name="Moore C.E."/>
            <person name="Hurst L."/>
            <person name="Atkin R."/>
            <person name="Barron A."/>
            <person name="Bason N."/>
            <person name="Bentley S.D."/>
            <person name="Chillingworth C."/>
            <person name="Chillingworth T."/>
            <person name="Churcher C."/>
            <person name="Clark L."/>
            <person name="Corton C."/>
            <person name="Cronin A."/>
            <person name="Doggett J."/>
            <person name="Dowd L."/>
            <person name="Feltwell T."/>
            <person name="Hance Z."/>
            <person name="Harris B."/>
            <person name="Hauser H."/>
            <person name="Holroyd S."/>
            <person name="Jagels K."/>
            <person name="James K.D."/>
            <person name="Lennard N."/>
            <person name="Line A."/>
            <person name="Mayes R."/>
            <person name="Moule S."/>
            <person name="Mungall K."/>
            <person name="Ormond D."/>
            <person name="Quail M.A."/>
            <person name="Rabbinowitsch E."/>
            <person name="Rutherford K.M."/>
            <person name="Sanders M."/>
            <person name="Sharp S."/>
            <person name="Simmonds M."/>
            <person name="Stevens K."/>
            <person name="Whitehead S."/>
            <person name="Barrell B.G."/>
            <person name="Spratt B.G."/>
            <person name="Parkhill J."/>
        </authorList>
    </citation>
    <scope>NUCLEOTIDE SEQUENCE [LARGE SCALE GENOMIC DNA]</scope>
    <source>
        <strain>MRSA252</strain>
    </source>
</reference>
<feature type="chain" id="PRO_0000102733" description="Ribosome-binding factor A">
    <location>
        <begin position="1"/>
        <end position="116"/>
    </location>
</feature>
<sequence length="116" mass="13515">MSSMRAERVGEQMKKELMDIINNKVKDPRVGFITITDVVLTNDLSQAKVFLTVLGNDKEVENTFKALDKAKGFIKSELGSRMRLRIMPELMYEYDQSIEYGNKIERMIQDLHKQDR</sequence>
<dbReference type="EMBL" id="BX571856">
    <property type="protein sequence ID" value="CAG40248.1"/>
    <property type="molecule type" value="Genomic_DNA"/>
</dbReference>
<dbReference type="RefSeq" id="WP_000097322.1">
    <property type="nucleotide sequence ID" value="NC_002952.2"/>
</dbReference>
<dbReference type="SMR" id="Q6GHG5"/>
<dbReference type="KEGG" id="sar:SAR1246"/>
<dbReference type="HOGENOM" id="CLU_089475_6_3_9"/>
<dbReference type="Proteomes" id="UP000000596">
    <property type="component" value="Chromosome"/>
</dbReference>
<dbReference type="GO" id="GO:0005829">
    <property type="term" value="C:cytosol"/>
    <property type="evidence" value="ECO:0007669"/>
    <property type="project" value="TreeGrafter"/>
</dbReference>
<dbReference type="GO" id="GO:0043024">
    <property type="term" value="F:ribosomal small subunit binding"/>
    <property type="evidence" value="ECO:0007669"/>
    <property type="project" value="TreeGrafter"/>
</dbReference>
<dbReference type="GO" id="GO:0030490">
    <property type="term" value="P:maturation of SSU-rRNA"/>
    <property type="evidence" value="ECO:0007669"/>
    <property type="project" value="UniProtKB-UniRule"/>
</dbReference>
<dbReference type="FunFam" id="3.30.300.20:FF:000009">
    <property type="entry name" value="Ribosome-binding factor A"/>
    <property type="match status" value="1"/>
</dbReference>
<dbReference type="Gene3D" id="3.30.300.20">
    <property type="match status" value="1"/>
</dbReference>
<dbReference type="HAMAP" id="MF_00003">
    <property type="entry name" value="RbfA"/>
    <property type="match status" value="1"/>
</dbReference>
<dbReference type="InterPro" id="IPR015946">
    <property type="entry name" value="KH_dom-like_a/b"/>
</dbReference>
<dbReference type="InterPro" id="IPR000238">
    <property type="entry name" value="RbfA"/>
</dbReference>
<dbReference type="InterPro" id="IPR023799">
    <property type="entry name" value="RbfA_dom_sf"/>
</dbReference>
<dbReference type="InterPro" id="IPR020053">
    <property type="entry name" value="Ribosome-bd_factorA_CS"/>
</dbReference>
<dbReference type="NCBIfam" id="TIGR00082">
    <property type="entry name" value="rbfA"/>
    <property type="match status" value="1"/>
</dbReference>
<dbReference type="PANTHER" id="PTHR33515">
    <property type="entry name" value="RIBOSOME-BINDING FACTOR A, CHLOROPLASTIC-RELATED"/>
    <property type="match status" value="1"/>
</dbReference>
<dbReference type="PANTHER" id="PTHR33515:SF1">
    <property type="entry name" value="RIBOSOME-BINDING FACTOR A, CHLOROPLASTIC-RELATED"/>
    <property type="match status" value="1"/>
</dbReference>
<dbReference type="Pfam" id="PF02033">
    <property type="entry name" value="RBFA"/>
    <property type="match status" value="1"/>
</dbReference>
<dbReference type="SUPFAM" id="SSF89919">
    <property type="entry name" value="Ribosome-binding factor A, RbfA"/>
    <property type="match status" value="1"/>
</dbReference>
<dbReference type="PROSITE" id="PS01319">
    <property type="entry name" value="RBFA"/>
    <property type="match status" value="1"/>
</dbReference>
<protein>
    <recommendedName>
        <fullName evidence="1">Ribosome-binding factor A</fullName>
    </recommendedName>
</protein>
<gene>
    <name evidence="1" type="primary">rbfA</name>
    <name type="ordered locus">SAR1246</name>
</gene>
<name>RBFA_STAAR</name>
<organism>
    <name type="scientific">Staphylococcus aureus (strain MRSA252)</name>
    <dbReference type="NCBI Taxonomy" id="282458"/>
    <lineage>
        <taxon>Bacteria</taxon>
        <taxon>Bacillati</taxon>
        <taxon>Bacillota</taxon>
        <taxon>Bacilli</taxon>
        <taxon>Bacillales</taxon>
        <taxon>Staphylococcaceae</taxon>
        <taxon>Staphylococcus</taxon>
    </lineage>
</organism>
<evidence type="ECO:0000255" key="1">
    <source>
        <dbReference type="HAMAP-Rule" id="MF_00003"/>
    </source>
</evidence>
<comment type="function">
    <text evidence="1">One of several proteins that assist in the late maturation steps of the functional core of the 30S ribosomal subunit. Associates with free 30S ribosomal subunits (but not with 30S subunits that are part of 70S ribosomes or polysomes). Required for efficient processing of 16S rRNA. May interact with the 5'-terminal helix region of 16S rRNA.</text>
</comment>
<comment type="subunit">
    <text evidence="1">Monomer. Binds 30S ribosomal subunits, but not 50S ribosomal subunits or 70S ribosomes.</text>
</comment>
<comment type="subcellular location">
    <subcellularLocation>
        <location evidence="1">Cytoplasm</location>
    </subcellularLocation>
</comment>
<comment type="similarity">
    <text evidence="1">Belongs to the RbfA family.</text>
</comment>
<accession>Q6GHG5</accession>
<proteinExistence type="inferred from homology"/>